<name>TSAD_CORDI</name>
<proteinExistence type="inferred from homology"/>
<accession>Q6NJ39</accession>
<organism>
    <name type="scientific">Corynebacterium diphtheriae (strain ATCC 700971 / NCTC 13129 / Biotype gravis)</name>
    <dbReference type="NCBI Taxonomy" id="257309"/>
    <lineage>
        <taxon>Bacteria</taxon>
        <taxon>Bacillati</taxon>
        <taxon>Actinomycetota</taxon>
        <taxon>Actinomycetes</taxon>
        <taxon>Mycobacteriales</taxon>
        <taxon>Corynebacteriaceae</taxon>
        <taxon>Corynebacterium</taxon>
    </lineage>
</organism>
<evidence type="ECO:0000255" key="1">
    <source>
        <dbReference type="HAMAP-Rule" id="MF_01445"/>
    </source>
</evidence>
<sequence length="350" mass="36146">MIVLGIESSCDETGVGIIDLADDGTMTIVGDAVASSMEQHARFGGVVPEIASRAHLESMIPVMKEALAQAGVERPDAVAATVGPGLAGALLVGASAAKAYAAAWGVPFYGVNHLGGHVAVANLEGEELPHSIALLVSGGHTQILEVQAVGKPMRELGSTLDDAAGEAYDKVARLLGLGYPGGPVVDKLAARGNRKAIRFPRGLSRADDLRGEHRYDFSFSGVKTSVARYVESAEREGRVISVEDVCASFQEAVVDVLTSKAIMACKDTGASVLLLGGGVAANSRLRELAAARCQSASIELRVPSFKLCTDNGVMIAAVASQLIHEGAQPSGLSVGTDTSLEVEIPLVHSL</sequence>
<gene>
    <name evidence="1" type="primary">tsaD</name>
    <name type="synonym">gcp</name>
    <name type="ordered locus">DIP0574</name>
</gene>
<comment type="function">
    <text evidence="1">Required for the formation of a threonylcarbamoyl group on adenosine at position 37 (t(6)A37) in tRNAs that read codons beginning with adenine. Is involved in the transfer of the threonylcarbamoyl moiety of threonylcarbamoyl-AMP (TC-AMP) to the N6 group of A37, together with TsaE and TsaB. TsaD likely plays a direct catalytic role in this reaction.</text>
</comment>
<comment type="catalytic activity">
    <reaction evidence="1">
        <text>L-threonylcarbamoyladenylate + adenosine(37) in tRNA = N(6)-L-threonylcarbamoyladenosine(37) in tRNA + AMP + H(+)</text>
        <dbReference type="Rhea" id="RHEA:37059"/>
        <dbReference type="Rhea" id="RHEA-COMP:10162"/>
        <dbReference type="Rhea" id="RHEA-COMP:10163"/>
        <dbReference type="ChEBI" id="CHEBI:15378"/>
        <dbReference type="ChEBI" id="CHEBI:73682"/>
        <dbReference type="ChEBI" id="CHEBI:74411"/>
        <dbReference type="ChEBI" id="CHEBI:74418"/>
        <dbReference type="ChEBI" id="CHEBI:456215"/>
        <dbReference type="EC" id="2.3.1.234"/>
    </reaction>
</comment>
<comment type="cofactor">
    <cofactor evidence="1">
        <name>Fe(2+)</name>
        <dbReference type="ChEBI" id="CHEBI:29033"/>
    </cofactor>
    <text evidence="1">Binds 1 Fe(2+) ion per subunit.</text>
</comment>
<comment type="subcellular location">
    <subcellularLocation>
        <location evidence="1">Cytoplasm</location>
    </subcellularLocation>
</comment>
<comment type="similarity">
    <text evidence="1">Belongs to the KAE1 / TsaD family.</text>
</comment>
<keyword id="KW-0012">Acyltransferase</keyword>
<keyword id="KW-0963">Cytoplasm</keyword>
<keyword id="KW-0408">Iron</keyword>
<keyword id="KW-0479">Metal-binding</keyword>
<keyword id="KW-1185">Reference proteome</keyword>
<keyword id="KW-0808">Transferase</keyword>
<keyword id="KW-0819">tRNA processing</keyword>
<protein>
    <recommendedName>
        <fullName evidence="1">tRNA N6-adenosine threonylcarbamoyltransferase</fullName>
        <ecNumber evidence="1">2.3.1.234</ecNumber>
    </recommendedName>
    <alternativeName>
        <fullName evidence="1">N6-L-threonylcarbamoyladenine synthase</fullName>
        <shortName evidence="1">t(6)A synthase</shortName>
    </alternativeName>
    <alternativeName>
        <fullName evidence="1">t(6)A37 threonylcarbamoyladenosine biosynthesis protein TsaD</fullName>
    </alternativeName>
    <alternativeName>
        <fullName evidence="1">tRNA threonylcarbamoyladenosine biosynthesis protein TsaD</fullName>
    </alternativeName>
</protein>
<feature type="chain" id="PRO_0000303336" description="tRNA N6-adenosine threonylcarbamoyltransferase">
    <location>
        <begin position="1"/>
        <end position="350"/>
    </location>
</feature>
<feature type="binding site" evidence="1">
    <location>
        <position position="113"/>
    </location>
    <ligand>
        <name>Fe cation</name>
        <dbReference type="ChEBI" id="CHEBI:24875"/>
    </ligand>
</feature>
<feature type="binding site" evidence="1">
    <location>
        <position position="117"/>
    </location>
    <ligand>
        <name>Fe cation</name>
        <dbReference type="ChEBI" id="CHEBI:24875"/>
    </ligand>
</feature>
<feature type="binding site" evidence="1">
    <location>
        <begin position="135"/>
        <end position="139"/>
    </location>
    <ligand>
        <name>substrate</name>
    </ligand>
</feature>
<feature type="binding site" evidence="1">
    <location>
        <position position="169"/>
    </location>
    <ligand>
        <name>substrate</name>
    </ligand>
</feature>
<feature type="binding site" evidence="1">
    <location>
        <position position="182"/>
    </location>
    <ligand>
        <name>substrate</name>
    </ligand>
</feature>
<feature type="binding site" evidence="1">
    <location>
        <position position="186"/>
    </location>
    <ligand>
        <name>substrate</name>
    </ligand>
</feature>
<feature type="binding site" evidence="1">
    <location>
        <position position="282"/>
    </location>
    <ligand>
        <name>substrate</name>
    </ligand>
</feature>
<feature type="binding site" evidence="1">
    <location>
        <position position="310"/>
    </location>
    <ligand>
        <name>Fe cation</name>
        <dbReference type="ChEBI" id="CHEBI:24875"/>
    </ligand>
</feature>
<dbReference type="EC" id="2.3.1.234" evidence="1"/>
<dbReference type="EMBL" id="BX248355">
    <property type="protein sequence ID" value="CAE49086.1"/>
    <property type="molecule type" value="Genomic_DNA"/>
</dbReference>
<dbReference type="RefSeq" id="WP_004566888.1">
    <property type="nucleotide sequence ID" value="NC_002935.2"/>
</dbReference>
<dbReference type="SMR" id="Q6NJ39"/>
<dbReference type="STRING" id="257309.DIP0574"/>
<dbReference type="GeneID" id="29422222"/>
<dbReference type="KEGG" id="cdi:DIP0574"/>
<dbReference type="HOGENOM" id="CLU_023208_0_2_11"/>
<dbReference type="Proteomes" id="UP000002198">
    <property type="component" value="Chromosome"/>
</dbReference>
<dbReference type="GO" id="GO:0005737">
    <property type="term" value="C:cytoplasm"/>
    <property type="evidence" value="ECO:0007669"/>
    <property type="project" value="UniProtKB-SubCell"/>
</dbReference>
<dbReference type="GO" id="GO:0005506">
    <property type="term" value="F:iron ion binding"/>
    <property type="evidence" value="ECO:0007669"/>
    <property type="project" value="UniProtKB-UniRule"/>
</dbReference>
<dbReference type="GO" id="GO:0061711">
    <property type="term" value="F:N(6)-L-threonylcarbamoyladenine synthase activity"/>
    <property type="evidence" value="ECO:0007669"/>
    <property type="project" value="UniProtKB-EC"/>
</dbReference>
<dbReference type="GO" id="GO:0002949">
    <property type="term" value="P:tRNA threonylcarbamoyladenosine modification"/>
    <property type="evidence" value="ECO:0007669"/>
    <property type="project" value="UniProtKB-UniRule"/>
</dbReference>
<dbReference type="CDD" id="cd24133">
    <property type="entry name" value="ASKHA_NBD_TsaD_bac"/>
    <property type="match status" value="1"/>
</dbReference>
<dbReference type="FunFam" id="3.30.420.40:FF:000040">
    <property type="entry name" value="tRNA N6-adenosine threonylcarbamoyltransferase"/>
    <property type="match status" value="1"/>
</dbReference>
<dbReference type="Gene3D" id="3.30.420.40">
    <property type="match status" value="2"/>
</dbReference>
<dbReference type="HAMAP" id="MF_01445">
    <property type="entry name" value="TsaD"/>
    <property type="match status" value="1"/>
</dbReference>
<dbReference type="InterPro" id="IPR043129">
    <property type="entry name" value="ATPase_NBD"/>
</dbReference>
<dbReference type="InterPro" id="IPR000905">
    <property type="entry name" value="Gcp-like_dom"/>
</dbReference>
<dbReference type="InterPro" id="IPR017861">
    <property type="entry name" value="KAE1/TsaD"/>
</dbReference>
<dbReference type="InterPro" id="IPR017860">
    <property type="entry name" value="Peptidase_M22_CS"/>
</dbReference>
<dbReference type="InterPro" id="IPR022450">
    <property type="entry name" value="TsaD"/>
</dbReference>
<dbReference type="NCBIfam" id="TIGR00329">
    <property type="entry name" value="gcp_kae1"/>
    <property type="match status" value="1"/>
</dbReference>
<dbReference type="NCBIfam" id="TIGR03723">
    <property type="entry name" value="T6A_TsaD_YgjD"/>
    <property type="match status" value="1"/>
</dbReference>
<dbReference type="PANTHER" id="PTHR11735">
    <property type="entry name" value="TRNA N6-ADENOSINE THREONYLCARBAMOYLTRANSFERASE"/>
    <property type="match status" value="1"/>
</dbReference>
<dbReference type="PANTHER" id="PTHR11735:SF6">
    <property type="entry name" value="TRNA N6-ADENOSINE THREONYLCARBAMOYLTRANSFERASE, MITOCHONDRIAL"/>
    <property type="match status" value="1"/>
</dbReference>
<dbReference type="Pfam" id="PF00814">
    <property type="entry name" value="TsaD"/>
    <property type="match status" value="1"/>
</dbReference>
<dbReference type="PRINTS" id="PR00789">
    <property type="entry name" value="OSIALOPTASE"/>
</dbReference>
<dbReference type="SUPFAM" id="SSF53067">
    <property type="entry name" value="Actin-like ATPase domain"/>
    <property type="match status" value="2"/>
</dbReference>
<dbReference type="PROSITE" id="PS01016">
    <property type="entry name" value="GLYCOPROTEASE"/>
    <property type="match status" value="1"/>
</dbReference>
<reference key="1">
    <citation type="journal article" date="2003" name="Nucleic Acids Res.">
        <title>The complete genome sequence and analysis of Corynebacterium diphtheriae NCTC13129.</title>
        <authorList>
            <person name="Cerdeno-Tarraga A.-M."/>
            <person name="Efstratiou A."/>
            <person name="Dover L.G."/>
            <person name="Holden M.T.G."/>
            <person name="Pallen M.J."/>
            <person name="Bentley S.D."/>
            <person name="Besra G.S."/>
            <person name="Churcher C.M."/>
            <person name="James K.D."/>
            <person name="De Zoysa A."/>
            <person name="Chillingworth T."/>
            <person name="Cronin A."/>
            <person name="Dowd L."/>
            <person name="Feltwell T."/>
            <person name="Hamlin N."/>
            <person name="Holroyd S."/>
            <person name="Jagels K."/>
            <person name="Moule S."/>
            <person name="Quail M.A."/>
            <person name="Rabbinowitsch E."/>
            <person name="Rutherford K.M."/>
            <person name="Thomson N.R."/>
            <person name="Unwin L."/>
            <person name="Whitehead S."/>
            <person name="Barrell B.G."/>
            <person name="Parkhill J."/>
        </authorList>
    </citation>
    <scope>NUCLEOTIDE SEQUENCE [LARGE SCALE GENOMIC DNA]</scope>
    <source>
        <strain>ATCC 700971 / NCTC 13129 / Biotype gravis</strain>
    </source>
</reference>